<accession>Q66H58</accession>
<gene>
    <name evidence="4" type="primary">Ints14</name>
    <name evidence="4" type="synonym">Vwa9</name>
</gene>
<protein>
    <recommendedName>
        <fullName evidence="4">Integrator complex subunit 14</fullName>
    </recommendedName>
    <alternativeName>
        <fullName evidence="3">von Willebrand factor A domain-containing protein 9</fullName>
    </alternativeName>
</protein>
<reference key="1">
    <citation type="journal article" date="2004" name="Genome Res.">
        <title>The status, quality, and expansion of the NIH full-length cDNA project: the Mammalian Gene Collection (MGC).</title>
        <authorList>
            <consortium name="The MGC Project Team"/>
        </authorList>
    </citation>
    <scope>NUCLEOTIDE SEQUENCE [LARGE SCALE MRNA]</scope>
    <source>
        <tissue>Testis</tissue>
    </source>
</reference>
<dbReference type="EMBL" id="BC082006">
    <property type="protein sequence ID" value="AAH82006.1"/>
    <property type="molecule type" value="mRNA"/>
</dbReference>
<dbReference type="RefSeq" id="NP_001007664.1">
    <property type="nucleotide sequence ID" value="NM_001007663.1"/>
</dbReference>
<dbReference type="RefSeq" id="XP_008764460.1">
    <property type="nucleotide sequence ID" value="XM_008766238.1"/>
</dbReference>
<dbReference type="RefSeq" id="XP_008764461.1">
    <property type="nucleotide sequence ID" value="XM_008766239.4"/>
</dbReference>
<dbReference type="SMR" id="Q66H58"/>
<dbReference type="FunCoup" id="Q66H58">
    <property type="interactions" value="4386"/>
</dbReference>
<dbReference type="STRING" id="10116.ENSRNOP00000016798"/>
<dbReference type="PhosphoSitePlus" id="Q66H58"/>
<dbReference type="PaxDb" id="10116-ENSRNOP00000016798"/>
<dbReference type="Ensembl" id="ENSRNOT00000016798.8">
    <property type="protein sequence ID" value="ENSRNOP00000016798.7"/>
    <property type="gene ID" value="ENSRNOG00000012469.8"/>
</dbReference>
<dbReference type="GeneID" id="300782"/>
<dbReference type="KEGG" id="rno:300782"/>
<dbReference type="UCSC" id="RGD:1359616">
    <property type="organism name" value="rat"/>
</dbReference>
<dbReference type="AGR" id="RGD:1359616"/>
<dbReference type="CTD" id="81556"/>
<dbReference type="RGD" id="1359616">
    <property type="gene designation" value="Ints14"/>
</dbReference>
<dbReference type="eggNOG" id="ENOG502QQ37">
    <property type="taxonomic scope" value="Eukaryota"/>
</dbReference>
<dbReference type="GeneTree" id="ENSGT00390000009486"/>
<dbReference type="HOGENOM" id="CLU_041485_0_0_1"/>
<dbReference type="InParanoid" id="Q66H58"/>
<dbReference type="OMA" id="QSSVVWI"/>
<dbReference type="OrthoDB" id="2374335at2759"/>
<dbReference type="PhylomeDB" id="Q66H58"/>
<dbReference type="TreeFam" id="TF323245"/>
<dbReference type="Reactome" id="R-RNO-6807505">
    <property type="pathway name" value="RNA polymerase II transcribes snRNA genes"/>
</dbReference>
<dbReference type="PRO" id="PR:Q66H58"/>
<dbReference type="Proteomes" id="UP000002494">
    <property type="component" value="Chromosome 8"/>
</dbReference>
<dbReference type="Bgee" id="ENSRNOG00000012469">
    <property type="expression patterns" value="Expressed in skeletal muscle tissue and 20 other cell types or tissues"/>
</dbReference>
<dbReference type="GO" id="GO:0160232">
    <property type="term" value="C:INTAC complex"/>
    <property type="evidence" value="ECO:0000250"/>
    <property type="project" value="UniProtKB"/>
</dbReference>
<dbReference type="GO" id="GO:0032039">
    <property type="term" value="C:integrator complex"/>
    <property type="evidence" value="ECO:0000266"/>
    <property type="project" value="RGD"/>
</dbReference>
<dbReference type="GO" id="GO:0005634">
    <property type="term" value="C:nucleus"/>
    <property type="evidence" value="ECO:0000266"/>
    <property type="project" value="RGD"/>
</dbReference>
<dbReference type="GO" id="GO:0160240">
    <property type="term" value="P:RNA polymerase II transcription initiation surveillance"/>
    <property type="evidence" value="ECO:0000250"/>
    <property type="project" value="UniProtKB"/>
</dbReference>
<dbReference type="GO" id="GO:0034472">
    <property type="term" value="P:snRNA 3'-end processing"/>
    <property type="evidence" value="ECO:0000318"/>
    <property type="project" value="GO_Central"/>
</dbReference>
<dbReference type="FunFam" id="3.40.50.410:FF:000137">
    <property type="entry name" value="Integrator complex subunit 14"/>
    <property type="match status" value="1"/>
</dbReference>
<dbReference type="Gene3D" id="3.40.50.410">
    <property type="entry name" value="von Willebrand factor, type A domain"/>
    <property type="match status" value="1"/>
</dbReference>
<dbReference type="InterPro" id="IPR039841">
    <property type="entry name" value="INTS14"/>
</dbReference>
<dbReference type="InterPro" id="IPR045814">
    <property type="entry name" value="IntS14_b-barrel"/>
</dbReference>
<dbReference type="InterPro" id="IPR046471">
    <property type="entry name" value="IntS14_C"/>
</dbReference>
<dbReference type="InterPro" id="IPR002035">
    <property type="entry name" value="VWF_A"/>
</dbReference>
<dbReference type="InterPro" id="IPR036465">
    <property type="entry name" value="vWFA_dom_sf"/>
</dbReference>
<dbReference type="PANTHER" id="PTHR13532">
    <property type="match status" value="1"/>
</dbReference>
<dbReference type="PANTHER" id="PTHR13532:SF3">
    <property type="entry name" value="INTEGRATOR COMPLEX SUBUNIT 14"/>
    <property type="match status" value="1"/>
</dbReference>
<dbReference type="Pfam" id="PF19435">
    <property type="entry name" value="IntS14_b-barrel"/>
    <property type="match status" value="1"/>
</dbReference>
<dbReference type="Pfam" id="PF20504">
    <property type="entry name" value="IntS14_C"/>
    <property type="match status" value="1"/>
</dbReference>
<dbReference type="Pfam" id="PF13519">
    <property type="entry name" value="VWA_2"/>
    <property type="match status" value="1"/>
</dbReference>
<dbReference type="SUPFAM" id="SSF53300">
    <property type="entry name" value="vWA-like"/>
    <property type="match status" value="1"/>
</dbReference>
<name>INT14_RAT</name>
<feature type="chain" id="PRO_0000296269" description="Integrator complex subunit 14">
    <location>
        <begin position="1"/>
        <end position="515"/>
    </location>
</feature>
<feature type="domain" description="VWFA">
    <location>
        <begin position="2"/>
        <end position="204"/>
    </location>
</feature>
<feature type="binding site" evidence="1">
    <location>
        <position position="10"/>
    </location>
    <ligand>
        <name>Mg(2+)</name>
        <dbReference type="ChEBI" id="CHEBI:18420"/>
    </ligand>
</feature>
<feature type="binding site" evidence="1">
    <location>
        <position position="12"/>
    </location>
    <ligand>
        <name>Mg(2+)</name>
        <dbReference type="ChEBI" id="CHEBI:18420"/>
    </ligand>
</feature>
<feature type="binding site" evidence="1">
    <location>
        <position position="86"/>
    </location>
    <ligand>
        <name>Mg(2+)</name>
        <dbReference type="ChEBI" id="CHEBI:18420"/>
    </ligand>
</feature>
<feature type="modified residue" description="N6-acetyllysine" evidence="1">
    <location>
        <position position="418"/>
    </location>
</feature>
<keyword id="KW-0007">Acetylation</keyword>
<keyword id="KW-0460">Magnesium</keyword>
<keyword id="KW-0479">Metal-binding</keyword>
<keyword id="KW-0539">Nucleus</keyword>
<keyword id="KW-1185">Reference proteome</keyword>
<evidence type="ECO:0000250" key="1">
    <source>
        <dbReference type="UniProtKB" id="Q96SY0"/>
    </source>
</evidence>
<evidence type="ECO:0000250" key="2">
    <source>
        <dbReference type="UniProtKB" id="Q9VPY0"/>
    </source>
</evidence>
<evidence type="ECO:0000305" key="3"/>
<evidence type="ECO:0000312" key="4">
    <source>
        <dbReference type="RGD" id="1359616"/>
    </source>
</evidence>
<sequence>MPTVVVMDVSLSMTRPVSVEGSEEYQRKHLAAHGLTMLFEHMATNYKLEFTALVVFSSLWELMVPFTRDYNTLQEALSNMDDYDKTCLESALVGVCNIVQQEWGGAIPCQVVLVTDGCLGIGRGSLRHSLATQNQRSESSRFPLPFPFPSKLYVMCMANLEELQSTDSLECLERLIDLNNGEGQIFTIDGPLCLKNVQSMFGKLIDLAYTPFHAALKCGHLTADVQVFPRPEPFVIDEEIDPIPKVINTDLEIVGFIDIADISSPPVLSRHLVLPIALNKEGDEVGAGITDDNEDENSANQIAGKIPNFCVLLHGSLKVEGMVALVQLGPEWHGMLYSQADSKKKSNLMMSLFEPGPEPLPWLGKMAQLGPISDAKENPYGEDDNKSPFPLQPKNKRSYAQNVTVWIKPSGLQTDVQKILRNARKLPEKTQTFYKELNRLRKAALAFGFLDLLKGVADMLERECTLLPDTAHPDAAFQLTHAAQQLKLASTEYAVYDLNITPLHTDFSGSSTERM</sequence>
<proteinExistence type="evidence at transcript level"/>
<organism>
    <name type="scientific">Rattus norvegicus</name>
    <name type="common">Rat</name>
    <dbReference type="NCBI Taxonomy" id="10116"/>
    <lineage>
        <taxon>Eukaryota</taxon>
        <taxon>Metazoa</taxon>
        <taxon>Chordata</taxon>
        <taxon>Craniata</taxon>
        <taxon>Vertebrata</taxon>
        <taxon>Euteleostomi</taxon>
        <taxon>Mammalia</taxon>
        <taxon>Eutheria</taxon>
        <taxon>Euarchontoglires</taxon>
        <taxon>Glires</taxon>
        <taxon>Rodentia</taxon>
        <taxon>Myomorpha</taxon>
        <taxon>Muroidea</taxon>
        <taxon>Muridae</taxon>
        <taxon>Murinae</taxon>
        <taxon>Rattus</taxon>
    </lineage>
</organism>
<comment type="function">
    <text evidence="1">Component of the integrator complex, a multiprotein complex that terminates RNA polymerase II (Pol II) transcription in the promoter-proximal region of genes. The integrator complex provides a quality checkpoint during transcription elongation by driving premature transcription termination of transcripts that are unfavorably configured for transcriptional elongation: the complex terminates transcription by (1) catalyzing dephosphorylation of the C-terminal domain (CTD) of Pol II subunit POLR2A/RPB1 and SUPT5H/SPT5, (2) degrading the exiting nascent RNA transcript via endonuclease activity and (3) promoting the release of Pol II from bound DNA. The integrator complex is also involved in terminating the synthesis of non-coding Pol II transcripts, such as enhancer RNAs (eRNAs), small nuclear RNAs (snRNAs), telomerase RNAs and long non-coding RNAs (lncRNAs). Within the integrator complex, INTS14 is part of the integrator tail module that acts as a platform for the recruitment of transcription factors at promoters.</text>
</comment>
<comment type="subunit">
    <text evidence="1">Component of the Integrator complex, composed of core subunits INTS1, INTS2, INTS3, INTS4, INTS5, INTS6, INTS7, INTS8, INTS9/RC74, INTS10, INTS11/CPSF3L, INTS12, INTS13, INTS14 and INTS15. The core complex associates with protein phosphatase 2A subunits PPP2CA and PPP2R1A, to form the Integrator-PP2A (INTAC) complex. INTS14 is part of the tail subcomplex, composed of INTS10, INTS13, INTS14 and INTS15.</text>
</comment>
<comment type="subcellular location">
    <subcellularLocation>
        <location evidence="2">Nucleus</location>
    </subcellularLocation>
</comment>
<comment type="similarity">
    <text evidence="3">Belongs to the Integrator subunit 14 family.</text>
</comment>